<accession>B1XD46</accession>
<gene>
    <name evidence="1" type="primary">bamA</name>
    <name type="synonym">yaeT</name>
    <name type="ordered locus">ECDH10B_0157</name>
</gene>
<evidence type="ECO:0000255" key="1">
    <source>
        <dbReference type="HAMAP-Rule" id="MF_01430"/>
    </source>
</evidence>
<evidence type="ECO:0000255" key="2">
    <source>
        <dbReference type="PROSITE-ProRule" id="PRU01115"/>
    </source>
</evidence>
<comment type="function">
    <text evidence="1">Part of the outer membrane protein assembly complex, which is involved in assembly and insertion of beta-barrel proteins into the outer membrane. Constitutes, with BamD, the core component of the assembly machinery.</text>
</comment>
<comment type="subunit">
    <text evidence="1">Part of the Bam complex, which is composed of the outer membrane protein BamA, and four lipoproteins BamB, BamC, BamD and BamE.</text>
</comment>
<comment type="subcellular location">
    <subcellularLocation>
        <location evidence="1">Cell outer membrane</location>
    </subcellularLocation>
</comment>
<comment type="similarity">
    <text evidence="1">Belongs to the BamA family.</text>
</comment>
<keyword id="KW-0998">Cell outer membrane</keyword>
<keyword id="KW-0472">Membrane</keyword>
<keyword id="KW-0677">Repeat</keyword>
<keyword id="KW-0732">Signal</keyword>
<keyword id="KW-0812">Transmembrane</keyword>
<keyword id="KW-1134">Transmembrane beta strand</keyword>
<dbReference type="EMBL" id="CP000948">
    <property type="protein sequence ID" value="ACB01355.1"/>
    <property type="molecule type" value="Genomic_DNA"/>
</dbReference>
<dbReference type="RefSeq" id="WP_001240896.1">
    <property type="nucleotide sequence ID" value="NC_010473.1"/>
</dbReference>
<dbReference type="BMRB" id="B1XD46"/>
<dbReference type="EMDB" id="EMD-16138"/>
<dbReference type="SMR" id="B1XD46"/>
<dbReference type="GeneID" id="93777248"/>
<dbReference type="KEGG" id="ecd:ECDH10B_0157"/>
<dbReference type="HOGENOM" id="CLU_007664_1_0_6"/>
<dbReference type="GO" id="GO:1990063">
    <property type="term" value="C:Bam protein complex"/>
    <property type="evidence" value="ECO:0007669"/>
    <property type="project" value="TreeGrafter"/>
</dbReference>
<dbReference type="GO" id="GO:0043165">
    <property type="term" value="P:Gram-negative-bacterium-type cell outer membrane assembly"/>
    <property type="evidence" value="ECO:0007669"/>
    <property type="project" value="UniProtKB-UniRule"/>
</dbReference>
<dbReference type="GO" id="GO:0051205">
    <property type="term" value="P:protein insertion into membrane"/>
    <property type="evidence" value="ECO:0007669"/>
    <property type="project" value="UniProtKB-UniRule"/>
</dbReference>
<dbReference type="FunFam" id="2.40.160.50:FF:000001">
    <property type="entry name" value="Outer membrane protein assembly factor BamA"/>
    <property type="match status" value="1"/>
</dbReference>
<dbReference type="FunFam" id="3.10.20.310:FF:000001">
    <property type="entry name" value="Outer membrane protein assembly factor BamA"/>
    <property type="match status" value="1"/>
</dbReference>
<dbReference type="FunFam" id="3.10.20.310:FF:000002">
    <property type="entry name" value="Outer membrane protein assembly factor BamA"/>
    <property type="match status" value="1"/>
</dbReference>
<dbReference type="FunFam" id="3.10.20.310:FF:000003">
    <property type="entry name" value="Outer membrane protein assembly factor BamA"/>
    <property type="match status" value="1"/>
</dbReference>
<dbReference type="FunFam" id="3.10.20.310:FF:000004">
    <property type="entry name" value="Outer membrane protein assembly factor BamA"/>
    <property type="match status" value="1"/>
</dbReference>
<dbReference type="FunFam" id="3.10.20.310:FF:000005">
    <property type="entry name" value="Outer membrane protein assembly factor BamA"/>
    <property type="match status" value="1"/>
</dbReference>
<dbReference type="Gene3D" id="3.10.20.310">
    <property type="entry name" value="membrane protein fhac"/>
    <property type="match status" value="5"/>
</dbReference>
<dbReference type="Gene3D" id="2.40.160.50">
    <property type="entry name" value="membrane protein fhac: a member of the omp85/tpsb transporter family"/>
    <property type="match status" value="1"/>
</dbReference>
<dbReference type="HAMAP" id="MF_01430">
    <property type="entry name" value="OM_assembly_BamA"/>
    <property type="match status" value="1"/>
</dbReference>
<dbReference type="InterPro" id="IPR000184">
    <property type="entry name" value="Bac_surfAg_D15"/>
</dbReference>
<dbReference type="InterPro" id="IPR010827">
    <property type="entry name" value="BamA/TamA_POTRA"/>
</dbReference>
<dbReference type="InterPro" id="IPR039910">
    <property type="entry name" value="D15-like"/>
</dbReference>
<dbReference type="InterPro" id="IPR023707">
    <property type="entry name" value="OM_assembly_BamA"/>
</dbReference>
<dbReference type="InterPro" id="IPR034746">
    <property type="entry name" value="POTRA"/>
</dbReference>
<dbReference type="NCBIfam" id="TIGR03303">
    <property type="entry name" value="OM_YaeT"/>
    <property type="match status" value="1"/>
</dbReference>
<dbReference type="NCBIfam" id="NF008287">
    <property type="entry name" value="PRK11067.1"/>
    <property type="match status" value="1"/>
</dbReference>
<dbReference type="PANTHER" id="PTHR12815:SF23">
    <property type="entry name" value="OUTER MEMBRANE PROTEIN ASSEMBLY FACTOR BAMA"/>
    <property type="match status" value="1"/>
</dbReference>
<dbReference type="PANTHER" id="PTHR12815">
    <property type="entry name" value="SORTING AND ASSEMBLY MACHINERY SAMM50 PROTEIN FAMILY MEMBER"/>
    <property type="match status" value="1"/>
</dbReference>
<dbReference type="Pfam" id="PF01103">
    <property type="entry name" value="Omp85"/>
    <property type="match status" value="1"/>
</dbReference>
<dbReference type="Pfam" id="PF07244">
    <property type="entry name" value="POTRA"/>
    <property type="match status" value="4"/>
</dbReference>
<dbReference type="PIRSF" id="PIRSF006076">
    <property type="entry name" value="OM_assembly_OMP85"/>
    <property type="match status" value="1"/>
</dbReference>
<dbReference type="PROSITE" id="PS51779">
    <property type="entry name" value="POTRA"/>
    <property type="match status" value="5"/>
</dbReference>
<sequence>MAMKKLLIASLLFSSATVYGAEGFVVKDIHFEGLQRVAVGAALLSMPVRTGDTVNDEDISNTIRALFATGNFEDVRVLRDGDTLLVQVKERPTIASITFSGNKSVKDDMLKQNLEASGVRVGESLDRTTIADIEKGLEDFYYSVGKYSASVKAVVTPLPRNRVDLKLVFQEGVSAEIQQINIVGNHAFTTDELISHFQLRDEVPWWNVVGDRKYQKQKLAGDLETLRSYYLDRGYARFNIDSTQVSLTPDKKGIYVTVNITEGDQYKLSGVEVSGNLAGHSAEIEQLTKIEPGELYNGTKVTKMEDDIKKLLGRYGYAYPRVQSMPEINDADKTVKLRVNVDAGNRFYVRKIRFEGNDTSKDAVLRREMRQMEGAWLGSDLVDQGKERLNRLGFFETVDTDTQRVPGSPDQVDVVYKVKERNTGSFNFGIGYGTESGVSFQAGVQQDNWLGTGYAVGINGTKNDYQTYAELSVTNPYFTVDGVSLGGRLFYNDFQADDADLSDYTNKSYGTDVTLGFPINEYNSLRAGLGYVHNSLSNMQPQVAMWRYLYSMGEHPSTSDQDNSFKTDDFTFNYGWTYNKLDRGYFPTDGSRVNLTGKVTIPGSDNEYYKVTLDTATYVPIDDDHKWVVLGRTRWGYGDGLGGKEMPFYENFYAGGSSTVRGFQSNTIGPKAVYFPHQASNYDPDYDYECATQDGAKDLCKSDDAVGGNAMAVASLEFITPTPFISDKYANSVRTSFFWDMGTVWDTNWDSSQYSGYPDYSDPSNIRMSAGIALQWMSPLGPLVFSYAQPFKKYDGDKAEQFQFNIGKTW</sequence>
<protein>
    <recommendedName>
        <fullName evidence="1">Outer membrane protein assembly factor BamA</fullName>
    </recommendedName>
</protein>
<feature type="signal peptide" evidence="1">
    <location>
        <begin position="1"/>
        <end position="20"/>
    </location>
</feature>
<feature type="chain" id="PRO_1000145774" description="Outer membrane protein assembly factor BamA">
    <location>
        <begin position="21"/>
        <end position="810"/>
    </location>
</feature>
<feature type="domain" description="POTRA 1" evidence="2">
    <location>
        <begin position="24"/>
        <end position="91"/>
    </location>
</feature>
<feature type="domain" description="POTRA 2" evidence="2">
    <location>
        <begin position="92"/>
        <end position="172"/>
    </location>
</feature>
<feature type="domain" description="POTRA 3" evidence="2">
    <location>
        <begin position="175"/>
        <end position="263"/>
    </location>
</feature>
<feature type="domain" description="POTRA 4" evidence="2">
    <location>
        <begin position="266"/>
        <end position="344"/>
    </location>
</feature>
<feature type="domain" description="POTRA 5" evidence="2">
    <location>
        <begin position="347"/>
        <end position="421"/>
    </location>
</feature>
<reference key="1">
    <citation type="journal article" date="2008" name="J. Bacteriol.">
        <title>The complete genome sequence of Escherichia coli DH10B: insights into the biology of a laboratory workhorse.</title>
        <authorList>
            <person name="Durfee T."/>
            <person name="Nelson R."/>
            <person name="Baldwin S."/>
            <person name="Plunkett G. III"/>
            <person name="Burland V."/>
            <person name="Mau B."/>
            <person name="Petrosino J.F."/>
            <person name="Qin X."/>
            <person name="Muzny D.M."/>
            <person name="Ayele M."/>
            <person name="Gibbs R.A."/>
            <person name="Csorgo B."/>
            <person name="Posfai G."/>
            <person name="Weinstock G.M."/>
            <person name="Blattner F.R."/>
        </authorList>
    </citation>
    <scope>NUCLEOTIDE SEQUENCE [LARGE SCALE GENOMIC DNA]</scope>
    <source>
        <strain>K12 / DH10B</strain>
    </source>
</reference>
<name>BAMA_ECODH</name>
<organism>
    <name type="scientific">Escherichia coli (strain K12 / DH10B)</name>
    <dbReference type="NCBI Taxonomy" id="316385"/>
    <lineage>
        <taxon>Bacteria</taxon>
        <taxon>Pseudomonadati</taxon>
        <taxon>Pseudomonadota</taxon>
        <taxon>Gammaproteobacteria</taxon>
        <taxon>Enterobacterales</taxon>
        <taxon>Enterobacteriaceae</taxon>
        <taxon>Escherichia</taxon>
    </lineage>
</organism>
<proteinExistence type="inferred from homology"/>